<gene>
    <name type="primary">pgxC</name>
    <name type="ORF">AO090005001400</name>
</gene>
<accession>Q2UQ40</accession>
<organism>
    <name type="scientific">Aspergillus oryzae (strain ATCC 42149 / RIB 40)</name>
    <name type="common">Yellow koji mold</name>
    <dbReference type="NCBI Taxonomy" id="510516"/>
    <lineage>
        <taxon>Eukaryota</taxon>
        <taxon>Fungi</taxon>
        <taxon>Dikarya</taxon>
        <taxon>Ascomycota</taxon>
        <taxon>Pezizomycotina</taxon>
        <taxon>Eurotiomycetes</taxon>
        <taxon>Eurotiomycetidae</taxon>
        <taxon>Eurotiales</taxon>
        <taxon>Aspergillaceae</taxon>
        <taxon>Aspergillus</taxon>
        <taxon>Aspergillus subgen. Circumdati</taxon>
    </lineage>
</organism>
<reference key="1">
    <citation type="journal article" date="2005" name="Nature">
        <title>Genome sequencing and analysis of Aspergillus oryzae.</title>
        <authorList>
            <person name="Machida M."/>
            <person name="Asai K."/>
            <person name="Sano M."/>
            <person name="Tanaka T."/>
            <person name="Kumagai T."/>
            <person name="Terai G."/>
            <person name="Kusumoto K."/>
            <person name="Arima T."/>
            <person name="Akita O."/>
            <person name="Kashiwagi Y."/>
            <person name="Abe K."/>
            <person name="Gomi K."/>
            <person name="Horiuchi H."/>
            <person name="Kitamoto K."/>
            <person name="Kobayashi T."/>
            <person name="Takeuchi M."/>
            <person name="Denning D.W."/>
            <person name="Galagan J.E."/>
            <person name="Nierman W.C."/>
            <person name="Yu J."/>
            <person name="Archer D.B."/>
            <person name="Bennett J.W."/>
            <person name="Bhatnagar D."/>
            <person name="Cleveland T.E."/>
            <person name="Fedorova N.D."/>
            <person name="Gotoh O."/>
            <person name="Horikawa H."/>
            <person name="Hosoyama A."/>
            <person name="Ichinomiya M."/>
            <person name="Igarashi R."/>
            <person name="Iwashita K."/>
            <person name="Juvvadi P.R."/>
            <person name="Kato M."/>
            <person name="Kato Y."/>
            <person name="Kin T."/>
            <person name="Kokubun A."/>
            <person name="Maeda H."/>
            <person name="Maeyama N."/>
            <person name="Maruyama J."/>
            <person name="Nagasaki H."/>
            <person name="Nakajima T."/>
            <person name="Oda K."/>
            <person name="Okada K."/>
            <person name="Paulsen I."/>
            <person name="Sakamoto K."/>
            <person name="Sawano T."/>
            <person name="Takahashi M."/>
            <person name="Takase K."/>
            <person name="Terabayashi Y."/>
            <person name="Wortman J.R."/>
            <person name="Yamada O."/>
            <person name="Yamagata Y."/>
            <person name="Anazawa H."/>
            <person name="Hata Y."/>
            <person name="Koide Y."/>
            <person name="Komori T."/>
            <person name="Koyama Y."/>
            <person name="Minetoki T."/>
            <person name="Suharnan S."/>
            <person name="Tanaka A."/>
            <person name="Isono K."/>
            <person name="Kuhara S."/>
            <person name="Ogasawara N."/>
            <person name="Kikuchi H."/>
        </authorList>
    </citation>
    <scope>NUCLEOTIDE SEQUENCE [LARGE SCALE GENOMIC DNA]</scope>
    <source>
        <strain>ATCC 42149 / RIB 40</strain>
    </source>
</reference>
<sequence>MLITKTAFLAFLLSSVPLAHGAGGNSSSPDARGRRCVVRSSNGTADDSPEVSRVFAQCATNSVIVFQEGVDYNIFQPIKATNLSNVEIQMHGNLHLPQNISAVRDIVNAGTSTWFTLEGPRVDWTGPEDVNNGWIKSYGQAWWDANPPNGTGISGRPHLMSYKTSQATIKYFRSGKPIAWNMKLHGEDIAVSHAIVDASSTGSFPFNTDAFDVQGTNIRISDSIMYNGDDAIAVGSDSHNIVFERNTIGYQSHGMSIGSLGKDASAFANITNLRFEDVTVIDALYAARFKSWTGGQGLVKNVTWKNIRVYNVTFPIFVTQSYYDQSVSRDGVDTESSVMMEDFTWEDFSGSINSYQPGDGSCATDPCWYNAGLPNLKHTEALVIECNTDKSCKNFVTKNIQLYPQVLEPASVICMKATAELNPNLGFNCSNGTFTSA</sequence>
<protein>
    <recommendedName>
        <fullName>Probable exopolygalacturonase C</fullName>
        <ecNumber>3.2.1.67</ecNumber>
    </recommendedName>
    <alternativeName>
        <fullName>Galacturan 1,4-alpha-galacturonidase C</fullName>
    </alternativeName>
    <alternativeName>
        <fullName>Poly(1,4-alpha-D-galacturonide)galacturonohydrolase C</fullName>
    </alternativeName>
</protein>
<feature type="signal peptide" evidence="2">
    <location>
        <begin position="1"/>
        <end position="21"/>
    </location>
</feature>
<feature type="chain" id="PRO_0000393687" description="Probable exopolygalacturonase C">
    <location>
        <begin position="22"/>
        <end position="437"/>
    </location>
</feature>
<feature type="repeat" description="PbH1 1">
    <location>
        <begin position="215"/>
        <end position="236"/>
    </location>
</feature>
<feature type="repeat" description="PbH1 2">
    <location>
        <begin position="238"/>
        <end position="259"/>
    </location>
</feature>
<feature type="repeat" description="PbH1 3">
    <location>
        <begin position="270"/>
        <end position="291"/>
    </location>
</feature>
<feature type="repeat" description="PbH1 4">
    <location>
        <begin position="299"/>
        <end position="320"/>
    </location>
</feature>
<feature type="active site" description="Proton donor" evidence="1">
    <location>
        <position position="229"/>
    </location>
</feature>
<feature type="active site" evidence="1">
    <location>
        <position position="253"/>
    </location>
</feature>
<feature type="glycosylation site" description="N-linked (GlcNAc...) asparagine" evidence="2">
    <location>
        <position position="25"/>
    </location>
</feature>
<feature type="glycosylation site" description="N-linked (GlcNAc...) asparagine" evidence="2">
    <location>
        <position position="42"/>
    </location>
</feature>
<feature type="glycosylation site" description="N-linked (GlcNAc...) asparagine" evidence="2">
    <location>
        <position position="82"/>
    </location>
</feature>
<feature type="glycosylation site" description="N-linked (GlcNAc...) asparagine" evidence="2">
    <location>
        <position position="99"/>
    </location>
</feature>
<feature type="glycosylation site" description="N-linked (GlcNAc...) asparagine" evidence="2">
    <location>
        <position position="149"/>
    </location>
</feature>
<feature type="glycosylation site" description="N-linked (GlcNAc...) asparagine" evidence="2">
    <location>
        <position position="269"/>
    </location>
</feature>
<feature type="glycosylation site" description="N-linked (GlcNAc...) asparagine" evidence="2">
    <location>
        <position position="301"/>
    </location>
</feature>
<feature type="glycosylation site" description="N-linked (GlcNAc...) asparagine" evidence="2">
    <location>
        <position position="311"/>
    </location>
</feature>
<feature type="glycosylation site" description="N-linked (GlcNAc...) asparagine" evidence="2">
    <location>
        <position position="428"/>
    </location>
</feature>
<feature type="glycosylation site" description="N-linked (GlcNAc...) asparagine" evidence="2">
    <location>
        <position position="431"/>
    </location>
</feature>
<feature type="disulfide bond" evidence="1">
    <location>
        <begin position="386"/>
        <end position="392"/>
    </location>
</feature>
<proteinExistence type="inferred from homology"/>
<name>PGXC_ASPOR</name>
<keyword id="KW-0961">Cell wall biogenesis/degradation</keyword>
<keyword id="KW-1015">Disulfide bond</keyword>
<keyword id="KW-0325">Glycoprotein</keyword>
<keyword id="KW-0326">Glycosidase</keyword>
<keyword id="KW-0378">Hydrolase</keyword>
<keyword id="KW-1185">Reference proteome</keyword>
<keyword id="KW-0677">Repeat</keyword>
<keyword id="KW-0964">Secreted</keyword>
<keyword id="KW-0732">Signal</keyword>
<evidence type="ECO:0000250" key="1"/>
<evidence type="ECO:0000255" key="2"/>
<evidence type="ECO:0000305" key="3"/>
<dbReference type="EC" id="3.2.1.67"/>
<dbReference type="EMBL" id="BA000049">
    <property type="protein sequence ID" value="BAE56325.1"/>
    <property type="molecule type" value="Genomic_DNA"/>
</dbReference>
<dbReference type="RefSeq" id="XP_001818327.1">
    <property type="nucleotide sequence ID" value="XM_001818275.1"/>
</dbReference>
<dbReference type="SMR" id="Q2UQ40"/>
<dbReference type="STRING" id="510516.Q2UQ40"/>
<dbReference type="CAZy" id="GH28">
    <property type="family name" value="Glycoside Hydrolase Family 28"/>
</dbReference>
<dbReference type="GlyCosmos" id="Q2UQ40">
    <property type="glycosylation" value="10 sites, No reported glycans"/>
</dbReference>
<dbReference type="EnsemblFungi" id="BAE56325">
    <property type="protein sequence ID" value="BAE56325"/>
    <property type="gene ID" value="AO090005001400"/>
</dbReference>
<dbReference type="GeneID" id="5990272"/>
<dbReference type="KEGG" id="aor:AO090005001400"/>
<dbReference type="VEuPathDB" id="FungiDB:AO090005001400"/>
<dbReference type="HOGENOM" id="CLU_016031_1_2_1"/>
<dbReference type="OMA" id="RNSYCEG"/>
<dbReference type="OrthoDB" id="46829at5052"/>
<dbReference type="Proteomes" id="UP000006564">
    <property type="component" value="Chromosome 1"/>
</dbReference>
<dbReference type="GO" id="GO:0005576">
    <property type="term" value="C:extracellular region"/>
    <property type="evidence" value="ECO:0000250"/>
    <property type="project" value="UniProtKB"/>
</dbReference>
<dbReference type="GO" id="GO:0047911">
    <property type="term" value="F:galacturan 1,4-alpha-galacturonidase activity"/>
    <property type="evidence" value="ECO:0007669"/>
    <property type="project" value="UniProtKB-EC"/>
</dbReference>
<dbReference type="GO" id="GO:0004650">
    <property type="term" value="F:polygalacturonase activity"/>
    <property type="evidence" value="ECO:0000250"/>
    <property type="project" value="UniProtKB"/>
</dbReference>
<dbReference type="GO" id="GO:0071555">
    <property type="term" value="P:cell wall organization"/>
    <property type="evidence" value="ECO:0007669"/>
    <property type="project" value="UniProtKB-KW"/>
</dbReference>
<dbReference type="GO" id="GO:0045490">
    <property type="term" value="P:pectin catabolic process"/>
    <property type="evidence" value="ECO:0000250"/>
    <property type="project" value="UniProtKB"/>
</dbReference>
<dbReference type="FunFam" id="2.160.20.10:FF:000037">
    <property type="entry name" value="Probable exopolygalacturonase C"/>
    <property type="match status" value="1"/>
</dbReference>
<dbReference type="Gene3D" id="2.160.20.10">
    <property type="entry name" value="Single-stranded right-handed beta-helix, Pectin lyase-like"/>
    <property type="match status" value="1"/>
</dbReference>
<dbReference type="InterPro" id="IPR000743">
    <property type="entry name" value="Glyco_hydro_28"/>
</dbReference>
<dbReference type="InterPro" id="IPR012334">
    <property type="entry name" value="Pectin_lyas_fold"/>
</dbReference>
<dbReference type="InterPro" id="IPR011050">
    <property type="entry name" value="Pectin_lyase_fold/virulence"/>
</dbReference>
<dbReference type="PANTHER" id="PTHR31736">
    <property type="match status" value="1"/>
</dbReference>
<dbReference type="PANTHER" id="PTHR31736:SF11">
    <property type="entry name" value="EXOPOLYGALACTURONASE C-RELATED"/>
    <property type="match status" value="1"/>
</dbReference>
<dbReference type="Pfam" id="PF00295">
    <property type="entry name" value="Glyco_hydro_28"/>
    <property type="match status" value="1"/>
</dbReference>
<dbReference type="SUPFAM" id="SSF51126">
    <property type="entry name" value="Pectin lyase-like"/>
    <property type="match status" value="1"/>
</dbReference>
<comment type="function">
    <text evidence="1">Specific in hydrolyzing the terminal glycosidic bond of polygalacturonic acid and oligogalacturonates.</text>
</comment>
<comment type="catalytic activity">
    <reaction>
        <text>[(1-&gt;4)-alpha-D-galacturonosyl](n) + H2O = alpha-D-galacturonate + [(1-&gt;4)-alpha-D-galacturonosyl](n-1)</text>
        <dbReference type="Rhea" id="RHEA:14117"/>
        <dbReference type="Rhea" id="RHEA-COMP:14570"/>
        <dbReference type="Rhea" id="RHEA-COMP:14572"/>
        <dbReference type="ChEBI" id="CHEBI:15377"/>
        <dbReference type="ChEBI" id="CHEBI:58658"/>
        <dbReference type="ChEBI" id="CHEBI:140523"/>
        <dbReference type="EC" id="3.2.1.67"/>
    </reaction>
</comment>
<comment type="subcellular location">
    <subcellularLocation>
        <location evidence="1">Secreted</location>
    </subcellularLocation>
</comment>
<comment type="similarity">
    <text evidence="3">Belongs to the glycosyl hydrolase 28 family.</text>
</comment>